<reference key="1">
    <citation type="journal article" date="2015" name="Microbiology">
        <title>Genome of Methanoregula boonei 6A8 reveals adaptations to oligotrophic peatland environments.</title>
        <authorList>
            <person name="Braeuer S."/>
            <person name="Cadillo-Quiroz H."/>
            <person name="Kyrpides N."/>
            <person name="Woyke T."/>
            <person name="Goodwin L."/>
            <person name="Detter C."/>
            <person name="Podell S."/>
            <person name="Yavitt J.B."/>
            <person name="Zinder S.H."/>
        </authorList>
    </citation>
    <scope>NUCLEOTIDE SEQUENCE [LARGE SCALE GENOMIC DNA]</scope>
    <source>
        <strain>DSM 21154 / JCM 14090 / 6A8</strain>
    </source>
</reference>
<name>ARGC_METB6</name>
<feature type="chain" id="PRO_1000011009" description="N-acetyl-gamma-glutamyl-phosphate reductase">
    <location>
        <begin position="1"/>
        <end position="328"/>
    </location>
</feature>
<feature type="active site" evidence="1">
    <location>
        <position position="143"/>
    </location>
</feature>
<accession>A7I4D1</accession>
<gene>
    <name evidence="1" type="primary">argC</name>
    <name type="ordered locus">Mboo_0068</name>
</gene>
<proteinExistence type="inferred from homology"/>
<protein>
    <recommendedName>
        <fullName evidence="1">N-acetyl-gamma-glutamyl-phosphate reductase</fullName>
        <shortName evidence="1">AGPR</shortName>
        <ecNumber evidence="1">1.2.1.38</ecNumber>
    </recommendedName>
    <alternativeName>
        <fullName evidence="1">N-acetyl-glutamate semialdehyde dehydrogenase</fullName>
        <shortName evidence="1">NAGSA dehydrogenase</shortName>
    </alternativeName>
</protein>
<comment type="function">
    <text evidence="1">Catalyzes the NADPH-dependent reduction of N-acetyl-5-glutamyl phosphate to yield N-acetyl-L-glutamate 5-semialdehyde.</text>
</comment>
<comment type="catalytic activity">
    <reaction evidence="1">
        <text>N-acetyl-L-glutamate 5-semialdehyde + phosphate + NADP(+) = N-acetyl-L-glutamyl 5-phosphate + NADPH + H(+)</text>
        <dbReference type="Rhea" id="RHEA:21588"/>
        <dbReference type="ChEBI" id="CHEBI:15378"/>
        <dbReference type="ChEBI" id="CHEBI:29123"/>
        <dbReference type="ChEBI" id="CHEBI:43474"/>
        <dbReference type="ChEBI" id="CHEBI:57783"/>
        <dbReference type="ChEBI" id="CHEBI:57936"/>
        <dbReference type="ChEBI" id="CHEBI:58349"/>
        <dbReference type="EC" id="1.2.1.38"/>
    </reaction>
</comment>
<comment type="pathway">
    <text evidence="1">Amino-acid biosynthesis; L-arginine biosynthesis; N(2)-acetyl-L-ornithine from L-glutamate: step 3/4.</text>
</comment>
<comment type="subcellular location">
    <subcellularLocation>
        <location evidence="1">Cytoplasm</location>
    </subcellularLocation>
</comment>
<comment type="similarity">
    <text evidence="1">Belongs to the NAGSA dehydrogenase family. Type 1 subfamily.</text>
</comment>
<keyword id="KW-0028">Amino-acid biosynthesis</keyword>
<keyword id="KW-0055">Arginine biosynthesis</keyword>
<keyword id="KW-0963">Cytoplasm</keyword>
<keyword id="KW-0521">NADP</keyword>
<keyword id="KW-0560">Oxidoreductase</keyword>
<keyword id="KW-1185">Reference proteome</keyword>
<organism>
    <name type="scientific">Methanoregula boonei (strain DSM 21154 / JCM 14090 / 6A8)</name>
    <dbReference type="NCBI Taxonomy" id="456442"/>
    <lineage>
        <taxon>Archaea</taxon>
        <taxon>Methanobacteriati</taxon>
        <taxon>Methanobacteriota</taxon>
        <taxon>Stenosarchaea group</taxon>
        <taxon>Methanomicrobia</taxon>
        <taxon>Methanomicrobiales</taxon>
        <taxon>Methanoregulaceae</taxon>
        <taxon>Methanoregula</taxon>
    </lineage>
</organism>
<sequence>MKVAIVGASGYAGGELVRLLYHHSSAEVTCVTSRSLAGIPLSEVHPQLTGFSDLRFENPAPDAIDADVAFLAVPHTAAMTIAGKLLSRGIKVVDLSADYRLPKDTFEKVYGVTHTDYFPAPYGIPELHRKECINAKFVANPGCFPTGATLAAAPIASRAHTIIFDSKTGVSGAGDNPSATTHYPNVGDNVSPYKWTSHRHLAEMKQELSKLGSKAACYFTPHLVPVNRGILTTAHILLNEPLETKEVEKLYREYYKDEFFVRYQKPMLSAVRGSNFCDIMVESEGKRVVVVSAIDNLVKGASGQAIQNMNLMCGFKETDGLDAPGLLP</sequence>
<evidence type="ECO:0000255" key="1">
    <source>
        <dbReference type="HAMAP-Rule" id="MF_00150"/>
    </source>
</evidence>
<dbReference type="EC" id="1.2.1.38" evidence="1"/>
<dbReference type="EMBL" id="CP000780">
    <property type="protein sequence ID" value="ABS54592.1"/>
    <property type="molecule type" value="Genomic_DNA"/>
</dbReference>
<dbReference type="RefSeq" id="WP_011991080.1">
    <property type="nucleotide sequence ID" value="NC_009712.1"/>
</dbReference>
<dbReference type="SMR" id="A7I4D1"/>
<dbReference type="STRING" id="456442.Mboo_0068"/>
<dbReference type="GeneID" id="5411717"/>
<dbReference type="KEGG" id="mbn:Mboo_0068"/>
<dbReference type="eggNOG" id="arCOG00495">
    <property type="taxonomic scope" value="Archaea"/>
</dbReference>
<dbReference type="HOGENOM" id="CLU_006384_0_1_2"/>
<dbReference type="OrthoDB" id="372053at2157"/>
<dbReference type="UniPathway" id="UPA00068">
    <property type="reaction ID" value="UER00108"/>
</dbReference>
<dbReference type="Proteomes" id="UP000002408">
    <property type="component" value="Chromosome"/>
</dbReference>
<dbReference type="GO" id="GO:0005737">
    <property type="term" value="C:cytoplasm"/>
    <property type="evidence" value="ECO:0007669"/>
    <property type="project" value="UniProtKB-SubCell"/>
</dbReference>
<dbReference type="GO" id="GO:0003942">
    <property type="term" value="F:N-acetyl-gamma-glutamyl-phosphate reductase activity"/>
    <property type="evidence" value="ECO:0007669"/>
    <property type="project" value="UniProtKB-UniRule"/>
</dbReference>
<dbReference type="GO" id="GO:0051287">
    <property type="term" value="F:NAD binding"/>
    <property type="evidence" value="ECO:0007669"/>
    <property type="project" value="InterPro"/>
</dbReference>
<dbReference type="GO" id="GO:0070401">
    <property type="term" value="F:NADP+ binding"/>
    <property type="evidence" value="ECO:0007669"/>
    <property type="project" value="InterPro"/>
</dbReference>
<dbReference type="GO" id="GO:0006526">
    <property type="term" value="P:L-arginine biosynthetic process"/>
    <property type="evidence" value="ECO:0007669"/>
    <property type="project" value="UniProtKB-UniRule"/>
</dbReference>
<dbReference type="CDD" id="cd23934">
    <property type="entry name" value="AGPR_1_C"/>
    <property type="match status" value="1"/>
</dbReference>
<dbReference type="CDD" id="cd17895">
    <property type="entry name" value="AGPR_1_N"/>
    <property type="match status" value="1"/>
</dbReference>
<dbReference type="Gene3D" id="3.30.360.10">
    <property type="entry name" value="Dihydrodipicolinate Reductase, domain 2"/>
    <property type="match status" value="1"/>
</dbReference>
<dbReference type="Gene3D" id="3.40.50.720">
    <property type="entry name" value="NAD(P)-binding Rossmann-like Domain"/>
    <property type="match status" value="1"/>
</dbReference>
<dbReference type="HAMAP" id="MF_00150">
    <property type="entry name" value="ArgC_type1"/>
    <property type="match status" value="1"/>
</dbReference>
<dbReference type="InterPro" id="IPR023013">
    <property type="entry name" value="AGPR_AS"/>
</dbReference>
<dbReference type="InterPro" id="IPR000706">
    <property type="entry name" value="AGPR_type-1"/>
</dbReference>
<dbReference type="InterPro" id="IPR036291">
    <property type="entry name" value="NAD(P)-bd_dom_sf"/>
</dbReference>
<dbReference type="InterPro" id="IPR050085">
    <property type="entry name" value="NAGSA_dehydrogenase"/>
</dbReference>
<dbReference type="InterPro" id="IPR000534">
    <property type="entry name" value="Semialdehyde_DH_NAD-bd"/>
</dbReference>
<dbReference type="NCBIfam" id="TIGR01850">
    <property type="entry name" value="argC"/>
    <property type="match status" value="1"/>
</dbReference>
<dbReference type="PANTHER" id="PTHR32338:SF10">
    <property type="entry name" value="N-ACETYL-GAMMA-GLUTAMYL-PHOSPHATE REDUCTASE, CHLOROPLASTIC-RELATED"/>
    <property type="match status" value="1"/>
</dbReference>
<dbReference type="PANTHER" id="PTHR32338">
    <property type="entry name" value="N-ACETYL-GAMMA-GLUTAMYL-PHOSPHATE REDUCTASE, CHLOROPLASTIC-RELATED-RELATED"/>
    <property type="match status" value="1"/>
</dbReference>
<dbReference type="Pfam" id="PF01118">
    <property type="entry name" value="Semialdhyde_dh"/>
    <property type="match status" value="1"/>
</dbReference>
<dbReference type="Pfam" id="PF22698">
    <property type="entry name" value="Semialdhyde_dhC_1"/>
    <property type="match status" value="1"/>
</dbReference>
<dbReference type="SMART" id="SM00859">
    <property type="entry name" value="Semialdhyde_dh"/>
    <property type="match status" value="1"/>
</dbReference>
<dbReference type="SUPFAM" id="SSF55347">
    <property type="entry name" value="Glyceraldehyde-3-phosphate dehydrogenase-like, C-terminal domain"/>
    <property type="match status" value="1"/>
</dbReference>
<dbReference type="SUPFAM" id="SSF51735">
    <property type="entry name" value="NAD(P)-binding Rossmann-fold domains"/>
    <property type="match status" value="1"/>
</dbReference>
<dbReference type="PROSITE" id="PS01224">
    <property type="entry name" value="ARGC"/>
    <property type="match status" value="1"/>
</dbReference>